<keyword id="KW-0028">Amino-acid biosynthesis</keyword>
<keyword id="KW-0963">Cytoplasm</keyword>
<keyword id="KW-0315">Glutamine amidotransferase</keyword>
<keyword id="KW-0368">Histidine biosynthesis</keyword>
<keyword id="KW-0378">Hydrolase</keyword>
<keyword id="KW-0456">Lyase</keyword>
<keyword id="KW-1185">Reference proteome</keyword>
<dbReference type="EC" id="4.3.2.10" evidence="1"/>
<dbReference type="EC" id="3.5.1.2" evidence="1"/>
<dbReference type="EMBL" id="AE015928">
    <property type="protein sequence ID" value="AAO76487.1"/>
    <property type="molecule type" value="Genomic_DNA"/>
</dbReference>
<dbReference type="RefSeq" id="NP_810293.1">
    <property type="nucleotide sequence ID" value="NC_004663.1"/>
</dbReference>
<dbReference type="RefSeq" id="WP_011107745.1">
    <property type="nucleotide sequence ID" value="NC_004663.1"/>
</dbReference>
<dbReference type="SMR" id="Q8A7Z4"/>
<dbReference type="FunCoup" id="Q8A7Z4">
    <property type="interactions" value="297"/>
</dbReference>
<dbReference type="STRING" id="226186.BT_1380"/>
<dbReference type="MEROPS" id="C26.965"/>
<dbReference type="PaxDb" id="226186-BT_1380"/>
<dbReference type="EnsemblBacteria" id="AAO76487">
    <property type="protein sequence ID" value="AAO76487"/>
    <property type="gene ID" value="BT_1380"/>
</dbReference>
<dbReference type="GeneID" id="60927361"/>
<dbReference type="KEGG" id="bth:BT_1380"/>
<dbReference type="eggNOG" id="COG0118">
    <property type="taxonomic scope" value="Bacteria"/>
</dbReference>
<dbReference type="HOGENOM" id="CLU_071837_0_0_10"/>
<dbReference type="InParanoid" id="Q8A7Z4"/>
<dbReference type="OrthoDB" id="9807137at2"/>
<dbReference type="UniPathway" id="UPA00031">
    <property type="reaction ID" value="UER00010"/>
</dbReference>
<dbReference type="Proteomes" id="UP000001414">
    <property type="component" value="Chromosome"/>
</dbReference>
<dbReference type="GO" id="GO:0005737">
    <property type="term" value="C:cytoplasm"/>
    <property type="evidence" value="ECO:0007669"/>
    <property type="project" value="UniProtKB-SubCell"/>
</dbReference>
<dbReference type="GO" id="GO:0004359">
    <property type="term" value="F:glutaminase activity"/>
    <property type="evidence" value="ECO:0007669"/>
    <property type="project" value="UniProtKB-EC"/>
</dbReference>
<dbReference type="GO" id="GO:0000107">
    <property type="term" value="F:imidazoleglycerol-phosphate synthase activity"/>
    <property type="evidence" value="ECO:0000318"/>
    <property type="project" value="GO_Central"/>
</dbReference>
<dbReference type="GO" id="GO:0016829">
    <property type="term" value="F:lyase activity"/>
    <property type="evidence" value="ECO:0007669"/>
    <property type="project" value="UniProtKB-KW"/>
</dbReference>
<dbReference type="GO" id="GO:0000105">
    <property type="term" value="P:L-histidine biosynthetic process"/>
    <property type="evidence" value="ECO:0007669"/>
    <property type="project" value="UniProtKB-UniRule"/>
</dbReference>
<dbReference type="CDD" id="cd01748">
    <property type="entry name" value="GATase1_IGP_Synthase"/>
    <property type="match status" value="1"/>
</dbReference>
<dbReference type="FunFam" id="3.40.50.880:FF:000097">
    <property type="entry name" value="Imidazole glycerol phosphate synthase subunit HisH"/>
    <property type="match status" value="1"/>
</dbReference>
<dbReference type="Gene3D" id="3.40.50.880">
    <property type="match status" value="1"/>
</dbReference>
<dbReference type="HAMAP" id="MF_00278">
    <property type="entry name" value="HisH"/>
    <property type="match status" value="1"/>
</dbReference>
<dbReference type="InterPro" id="IPR029062">
    <property type="entry name" value="Class_I_gatase-like"/>
</dbReference>
<dbReference type="InterPro" id="IPR017926">
    <property type="entry name" value="GATASE"/>
</dbReference>
<dbReference type="InterPro" id="IPR010139">
    <property type="entry name" value="Imidazole-glycPsynth_HisH"/>
</dbReference>
<dbReference type="NCBIfam" id="TIGR01855">
    <property type="entry name" value="IMP_synth_hisH"/>
    <property type="match status" value="1"/>
</dbReference>
<dbReference type="PANTHER" id="PTHR42701">
    <property type="entry name" value="IMIDAZOLE GLYCEROL PHOSPHATE SYNTHASE SUBUNIT HISH"/>
    <property type="match status" value="1"/>
</dbReference>
<dbReference type="PANTHER" id="PTHR42701:SF1">
    <property type="entry name" value="IMIDAZOLE GLYCEROL PHOSPHATE SYNTHASE SUBUNIT HISH"/>
    <property type="match status" value="1"/>
</dbReference>
<dbReference type="Pfam" id="PF00117">
    <property type="entry name" value="GATase"/>
    <property type="match status" value="1"/>
</dbReference>
<dbReference type="PIRSF" id="PIRSF000495">
    <property type="entry name" value="Amidotransf_hisH"/>
    <property type="match status" value="1"/>
</dbReference>
<dbReference type="SUPFAM" id="SSF52317">
    <property type="entry name" value="Class I glutamine amidotransferase-like"/>
    <property type="match status" value="1"/>
</dbReference>
<dbReference type="PROSITE" id="PS51273">
    <property type="entry name" value="GATASE_TYPE_1"/>
    <property type="match status" value="1"/>
</dbReference>
<name>HIS5_BACTN</name>
<evidence type="ECO:0000255" key="1">
    <source>
        <dbReference type="HAMAP-Rule" id="MF_00278"/>
    </source>
</evidence>
<protein>
    <recommendedName>
        <fullName evidence="1">Imidazole glycerol phosphate synthase subunit HisH</fullName>
        <ecNumber evidence="1">4.3.2.10</ecNumber>
    </recommendedName>
    <alternativeName>
        <fullName evidence="1">IGP synthase glutaminase subunit</fullName>
        <ecNumber evidence="1">3.5.1.2</ecNumber>
    </alternativeName>
    <alternativeName>
        <fullName evidence="1">IGP synthase subunit HisH</fullName>
    </alternativeName>
    <alternativeName>
        <fullName evidence="1">ImGP synthase subunit HisH</fullName>
        <shortName evidence="1">IGPS subunit HisH</shortName>
    </alternativeName>
</protein>
<sequence length="196" mass="22134">MKVAVVKYNAGNIRSVDYALKRLGVEAVITADKEILQSADKVIFPGVGEAGTTMNHLKATGLDELIKNLRQPVFGICLGMQLMCRHSEEGEVDCLNIFDVDVKRFVPQKHEDKVPHMGWNTIGKTNSKLFEGFTEEEFVYFVHSFYVPVCDFTAAETDYIHPFSAALHKDNFYATQFHPEKSGKTGERVLRNFLDL</sequence>
<feature type="chain" id="PRO_0000152345" description="Imidazole glycerol phosphate synthase subunit HisH">
    <location>
        <begin position="1"/>
        <end position="196"/>
    </location>
</feature>
<feature type="domain" description="Glutamine amidotransferase type-1" evidence="1">
    <location>
        <begin position="2"/>
        <end position="196"/>
    </location>
</feature>
<feature type="active site" description="Nucleophile" evidence="1">
    <location>
        <position position="77"/>
    </location>
</feature>
<feature type="active site" evidence="1">
    <location>
        <position position="178"/>
    </location>
</feature>
<feature type="active site" evidence="1">
    <location>
        <position position="180"/>
    </location>
</feature>
<reference key="1">
    <citation type="journal article" date="2003" name="Science">
        <title>A genomic view of the human-Bacteroides thetaiotaomicron symbiosis.</title>
        <authorList>
            <person name="Xu J."/>
            <person name="Bjursell M.K."/>
            <person name="Himrod J."/>
            <person name="Deng S."/>
            <person name="Carmichael L.K."/>
            <person name="Chiang H.C."/>
            <person name="Hooper L.V."/>
            <person name="Gordon J.I."/>
        </authorList>
    </citation>
    <scope>NUCLEOTIDE SEQUENCE [LARGE SCALE GENOMIC DNA]</scope>
    <source>
        <strain>ATCC 29148 / DSM 2079 / JCM 5827 / CCUG 10774 / NCTC 10582 / VPI-5482 / E50</strain>
    </source>
</reference>
<comment type="function">
    <text evidence="1">IGPS catalyzes the conversion of PRFAR and glutamine to IGP, AICAR and glutamate. The HisH subunit catalyzes the hydrolysis of glutamine to glutamate and ammonia as part of the synthesis of IGP and AICAR. The resulting ammonia molecule is channeled to the active site of HisF.</text>
</comment>
<comment type="catalytic activity">
    <reaction evidence="1">
        <text>5-[(5-phospho-1-deoxy-D-ribulos-1-ylimino)methylamino]-1-(5-phospho-beta-D-ribosyl)imidazole-4-carboxamide + L-glutamine = D-erythro-1-(imidazol-4-yl)glycerol 3-phosphate + 5-amino-1-(5-phospho-beta-D-ribosyl)imidazole-4-carboxamide + L-glutamate + H(+)</text>
        <dbReference type="Rhea" id="RHEA:24793"/>
        <dbReference type="ChEBI" id="CHEBI:15378"/>
        <dbReference type="ChEBI" id="CHEBI:29985"/>
        <dbReference type="ChEBI" id="CHEBI:58278"/>
        <dbReference type="ChEBI" id="CHEBI:58359"/>
        <dbReference type="ChEBI" id="CHEBI:58475"/>
        <dbReference type="ChEBI" id="CHEBI:58525"/>
        <dbReference type="EC" id="4.3.2.10"/>
    </reaction>
</comment>
<comment type="catalytic activity">
    <reaction evidence="1">
        <text>L-glutamine + H2O = L-glutamate + NH4(+)</text>
        <dbReference type="Rhea" id="RHEA:15889"/>
        <dbReference type="ChEBI" id="CHEBI:15377"/>
        <dbReference type="ChEBI" id="CHEBI:28938"/>
        <dbReference type="ChEBI" id="CHEBI:29985"/>
        <dbReference type="ChEBI" id="CHEBI:58359"/>
        <dbReference type="EC" id="3.5.1.2"/>
    </reaction>
</comment>
<comment type="pathway">
    <text evidence="1">Amino-acid biosynthesis; L-histidine biosynthesis; L-histidine from 5-phospho-alpha-D-ribose 1-diphosphate: step 5/9.</text>
</comment>
<comment type="subunit">
    <text evidence="1">Heterodimer of HisH and HisF.</text>
</comment>
<comment type="subcellular location">
    <subcellularLocation>
        <location evidence="1">Cytoplasm</location>
    </subcellularLocation>
</comment>
<proteinExistence type="inferred from homology"/>
<gene>
    <name evidence="1" type="primary">hisH</name>
    <name type="ordered locus">BT_1380</name>
</gene>
<accession>Q8A7Z4</accession>
<organism>
    <name type="scientific">Bacteroides thetaiotaomicron (strain ATCC 29148 / DSM 2079 / JCM 5827 / CCUG 10774 / NCTC 10582 / VPI-5482 / E50)</name>
    <dbReference type="NCBI Taxonomy" id="226186"/>
    <lineage>
        <taxon>Bacteria</taxon>
        <taxon>Pseudomonadati</taxon>
        <taxon>Bacteroidota</taxon>
        <taxon>Bacteroidia</taxon>
        <taxon>Bacteroidales</taxon>
        <taxon>Bacteroidaceae</taxon>
        <taxon>Bacteroides</taxon>
    </lineage>
</organism>